<accession>Q3UFS0</accession>
<accession>B9EID5</accession>
<accession>Q148T6</accession>
<accession>Q3TM33</accession>
<accession>Q3TMB0</accession>
<accession>Q3TRM3</accession>
<accession>Q3UFA3</accession>
<accession>Q80TA0</accession>
<comment type="function">
    <text evidence="1">Serves as substrate adapter subunit in the E3 ubiquitin ligase complex ZYG11B-CUL2-Elongin BC. Acts redudantly with ZER1 to target substrates bearing N-terminal glycine degrons for proteasomal degradation. Involved in the clearance of proteolytic fragments generated by caspase cleavage during apoptosis since N-terminal glycine degrons are strongly enriched at caspase cleavage sites. Also important in the quality control of protein N-myristoylation in which N-terminal glycine degrons are conditionally exposed after a failure of N-myristoylation.</text>
</comment>
<comment type="subunit">
    <text evidence="1">Interacts with ELOC/Elongin C. Part of an E3 ubiquitin ligase complex including ZYG11B, CUL2 and Elongin BC.</text>
</comment>
<comment type="alternative products">
    <event type="alternative splicing"/>
    <isoform>
        <id>Q3UFS0-1</id>
        <name>1</name>
        <sequence type="displayed"/>
    </isoform>
    <isoform>
        <id>Q3UFS0-2</id>
        <name>2</name>
        <sequence type="described" ref="VSP_028225 VSP_028226"/>
    </isoform>
    <isoform>
        <id>Q3UFS0-3</id>
        <name>3</name>
        <sequence type="described" ref="VSP_028227 VSP_028228"/>
    </isoform>
</comment>
<comment type="similarity">
    <text evidence="4">Belongs to the zyg-11 family.</text>
</comment>
<dbReference type="EMBL" id="AK148335">
    <property type="protein sequence ID" value="BAE28490.1"/>
    <property type="molecule type" value="mRNA"/>
</dbReference>
<dbReference type="EMBL" id="AK148760">
    <property type="protein sequence ID" value="BAE28658.1"/>
    <property type="molecule type" value="mRNA"/>
</dbReference>
<dbReference type="EMBL" id="AK162646">
    <property type="protein sequence ID" value="BAE37005.1"/>
    <property type="molecule type" value="mRNA"/>
</dbReference>
<dbReference type="EMBL" id="AK166031">
    <property type="protein sequence ID" value="BAE38532.1"/>
    <property type="molecule type" value="mRNA"/>
</dbReference>
<dbReference type="EMBL" id="AK166174">
    <property type="protein sequence ID" value="BAE38609.1"/>
    <property type="molecule type" value="mRNA"/>
</dbReference>
<dbReference type="EMBL" id="AL627238">
    <property type="status" value="NOT_ANNOTATED_CDS"/>
    <property type="molecule type" value="Genomic_DNA"/>
</dbReference>
<dbReference type="EMBL" id="BX293563">
    <property type="status" value="NOT_ANNOTATED_CDS"/>
    <property type="molecule type" value="Genomic_DNA"/>
</dbReference>
<dbReference type="EMBL" id="BC117977">
    <property type="protein sequence ID" value="AAI17978.1"/>
    <property type="molecule type" value="mRNA"/>
</dbReference>
<dbReference type="EMBL" id="BC117978">
    <property type="protein sequence ID" value="AAI17979.1"/>
    <property type="molecule type" value="mRNA"/>
</dbReference>
<dbReference type="EMBL" id="BC139383">
    <property type="protein sequence ID" value="AAI39384.1"/>
    <property type="molecule type" value="mRNA"/>
</dbReference>
<dbReference type="EMBL" id="BC139384">
    <property type="protein sequence ID" value="AAI39385.1"/>
    <property type="molecule type" value="mRNA"/>
</dbReference>
<dbReference type="EMBL" id="AK122545">
    <property type="protein sequence ID" value="BAC65827.1"/>
    <property type="molecule type" value="mRNA"/>
</dbReference>
<dbReference type="CCDS" id="CCDS18448.1">
    <molecule id="Q3UFS0-1"/>
</dbReference>
<dbReference type="RefSeq" id="NP_001028806.2">
    <molecule id="Q3UFS0-1"/>
    <property type="nucleotide sequence ID" value="NM_001033634.4"/>
</dbReference>
<dbReference type="SMR" id="Q3UFS0"/>
<dbReference type="BioGRID" id="576569">
    <property type="interactions" value="1"/>
</dbReference>
<dbReference type="FunCoup" id="Q3UFS0">
    <property type="interactions" value="228"/>
</dbReference>
<dbReference type="STRING" id="10090.ENSMUSP00000043844"/>
<dbReference type="GlyGen" id="Q3UFS0">
    <property type="glycosylation" value="1 site, 1 N-linked glycan (1 site)"/>
</dbReference>
<dbReference type="iPTMnet" id="Q3UFS0"/>
<dbReference type="PhosphoSitePlus" id="Q3UFS0"/>
<dbReference type="SwissPalm" id="Q3UFS0"/>
<dbReference type="PaxDb" id="10090-ENSMUSP00000043844"/>
<dbReference type="PeptideAtlas" id="Q3UFS0"/>
<dbReference type="ProteomicsDB" id="275321">
    <molecule id="Q3UFS0-1"/>
</dbReference>
<dbReference type="ProteomicsDB" id="275322">
    <molecule id="Q3UFS0-2"/>
</dbReference>
<dbReference type="ProteomicsDB" id="275323">
    <molecule id="Q3UFS0-3"/>
</dbReference>
<dbReference type="Pumba" id="Q3UFS0"/>
<dbReference type="Antibodypedia" id="33029">
    <property type="antibodies" value="53 antibodies from 11 providers"/>
</dbReference>
<dbReference type="Ensembl" id="ENSMUST00000043616.7">
    <molecule id="Q3UFS0-1"/>
    <property type="protein sequence ID" value="ENSMUSP00000043844.7"/>
    <property type="gene ID" value="ENSMUSG00000034636.10"/>
</dbReference>
<dbReference type="GeneID" id="414872"/>
<dbReference type="KEGG" id="mmu:414872"/>
<dbReference type="UCSC" id="uc008uax.2">
    <molecule id="Q3UFS0-1"/>
    <property type="organism name" value="mouse"/>
</dbReference>
<dbReference type="UCSC" id="uc008uay.2">
    <molecule id="Q3UFS0-2"/>
    <property type="organism name" value="mouse"/>
</dbReference>
<dbReference type="AGR" id="MGI:2685277"/>
<dbReference type="CTD" id="79699"/>
<dbReference type="MGI" id="MGI:2685277">
    <property type="gene designation" value="Zyg11b"/>
</dbReference>
<dbReference type="VEuPathDB" id="HostDB:ENSMUSG00000034636"/>
<dbReference type="eggNOG" id="KOG3665">
    <property type="taxonomic scope" value="Eukaryota"/>
</dbReference>
<dbReference type="GeneTree" id="ENSGT00530000063187"/>
<dbReference type="HOGENOM" id="CLU_011533_1_0_1"/>
<dbReference type="InParanoid" id="Q3UFS0"/>
<dbReference type="OMA" id="QAWTLSH"/>
<dbReference type="OrthoDB" id="120976at2759"/>
<dbReference type="PhylomeDB" id="Q3UFS0"/>
<dbReference type="TreeFam" id="TF313007"/>
<dbReference type="BioGRID-ORCS" id="414872">
    <property type="hits" value="3 hits in 79 CRISPR screens"/>
</dbReference>
<dbReference type="ChiTaRS" id="Zyg11b">
    <property type="organism name" value="mouse"/>
</dbReference>
<dbReference type="PRO" id="PR:Q3UFS0"/>
<dbReference type="Proteomes" id="UP000000589">
    <property type="component" value="Chromosome 4"/>
</dbReference>
<dbReference type="RNAct" id="Q3UFS0">
    <property type="molecule type" value="protein"/>
</dbReference>
<dbReference type="Bgee" id="ENSMUSG00000034636">
    <property type="expression patterns" value="Expressed in medial vestibular nucleus and 240 other cell types or tissues"/>
</dbReference>
<dbReference type="GO" id="GO:0031462">
    <property type="term" value="C:Cul2-RING ubiquitin ligase complex"/>
    <property type="evidence" value="ECO:0000250"/>
    <property type="project" value="UniProtKB"/>
</dbReference>
<dbReference type="GO" id="GO:0032436">
    <property type="term" value="P:positive regulation of proteasomal ubiquitin-dependent protein catabolic process"/>
    <property type="evidence" value="ECO:0000250"/>
    <property type="project" value="UniProtKB"/>
</dbReference>
<dbReference type="GO" id="GO:0006515">
    <property type="term" value="P:protein quality control for misfolded or incompletely synthesized proteins"/>
    <property type="evidence" value="ECO:0000250"/>
    <property type="project" value="UniProtKB"/>
</dbReference>
<dbReference type="FunFam" id="3.80.10.10:FF:001025">
    <property type="entry name" value="Protein zyg-11 homolog A"/>
    <property type="match status" value="1"/>
</dbReference>
<dbReference type="FunFam" id="1.25.10.10:FF:000086">
    <property type="entry name" value="protein zyg-11 homolog B isoform X2"/>
    <property type="match status" value="1"/>
</dbReference>
<dbReference type="Gene3D" id="1.25.10.10">
    <property type="entry name" value="Leucine-rich Repeat Variant"/>
    <property type="match status" value="1"/>
</dbReference>
<dbReference type="Gene3D" id="3.80.10.10">
    <property type="entry name" value="Ribonuclease Inhibitor"/>
    <property type="match status" value="2"/>
</dbReference>
<dbReference type="InterPro" id="IPR011989">
    <property type="entry name" value="ARM-like"/>
</dbReference>
<dbReference type="InterPro" id="IPR016024">
    <property type="entry name" value="ARM-type_fold"/>
</dbReference>
<dbReference type="InterPro" id="IPR001611">
    <property type="entry name" value="Leu-rich_rpt"/>
</dbReference>
<dbReference type="InterPro" id="IPR032675">
    <property type="entry name" value="LRR_dom_sf"/>
</dbReference>
<dbReference type="InterPro" id="IPR056845">
    <property type="entry name" value="LRR_Zer-1"/>
</dbReference>
<dbReference type="InterPro" id="IPR055142">
    <property type="entry name" value="ZER1-like_C"/>
</dbReference>
<dbReference type="InterPro" id="IPR051341">
    <property type="entry name" value="Zyg-11_UBL_adapter"/>
</dbReference>
<dbReference type="PANTHER" id="PTHR12904">
    <property type="match status" value="1"/>
</dbReference>
<dbReference type="PANTHER" id="PTHR12904:SF21">
    <property type="entry name" value="PROTEIN ZYG-11 HOMOLOG B"/>
    <property type="match status" value="1"/>
</dbReference>
<dbReference type="Pfam" id="PF25013">
    <property type="entry name" value="LRR_Zer-1"/>
    <property type="match status" value="1"/>
</dbReference>
<dbReference type="Pfam" id="PF22964">
    <property type="entry name" value="ZER1-like_2nd"/>
    <property type="match status" value="1"/>
</dbReference>
<dbReference type="SUPFAM" id="SSF48371">
    <property type="entry name" value="ARM repeat"/>
    <property type="match status" value="1"/>
</dbReference>
<dbReference type="SUPFAM" id="SSF52047">
    <property type="entry name" value="RNI-like"/>
    <property type="match status" value="1"/>
</dbReference>
<dbReference type="PROSITE" id="PS51450">
    <property type="entry name" value="LRR"/>
    <property type="match status" value="1"/>
</dbReference>
<feature type="chain" id="PRO_0000305088" description="Protein zyg-11 homolog B">
    <location>
        <begin position="1"/>
        <end position="744"/>
    </location>
</feature>
<feature type="repeat" description="LRR 1">
    <location>
        <begin position="185"/>
        <end position="208"/>
    </location>
</feature>
<feature type="repeat" description="LRR 2">
    <location>
        <begin position="216"/>
        <end position="236"/>
    </location>
</feature>
<feature type="repeat" description="LRR 3">
    <location>
        <begin position="237"/>
        <end position="261"/>
    </location>
</feature>
<feature type="splice variant" id="VSP_028225" description="In isoform 2." evidence="3">
    <original>FE</original>
    <variation>QV</variation>
    <location>
        <begin position="446"/>
        <end position="447"/>
    </location>
</feature>
<feature type="splice variant" id="VSP_028226" description="In isoform 2." evidence="3">
    <location>
        <begin position="448"/>
        <end position="744"/>
    </location>
</feature>
<feature type="splice variant" id="VSP_028227" description="In isoform 3." evidence="2">
    <original>IISILAA</original>
    <variation>LALNSKH</variation>
    <location>
        <begin position="471"/>
        <end position="477"/>
    </location>
</feature>
<feature type="splice variant" id="VSP_028228" description="In isoform 3." evidence="2">
    <location>
        <begin position="478"/>
        <end position="744"/>
    </location>
</feature>
<feature type="sequence conflict" description="In Ref. 1; BAE28490." evidence="4" ref="1">
    <original>D</original>
    <variation>G</variation>
    <location>
        <position position="263"/>
    </location>
</feature>
<feature type="sequence conflict" description="In Ref. 1; BAE37005." evidence="4" ref="1">
    <original>Q</original>
    <variation>K</variation>
    <location>
        <position position="289"/>
    </location>
</feature>
<feature type="sequence conflict" description="In Ref. 1; BAE38609." evidence="4" ref="1">
    <original>M</original>
    <variation>T</variation>
    <location>
        <position position="311"/>
    </location>
</feature>
<feature type="sequence conflict" description="In Ref. 1; BAE28658." evidence="4" ref="1">
    <original>C</original>
    <variation>S</variation>
    <location>
        <position position="532"/>
    </location>
</feature>
<feature type="sequence conflict" description="In Ref. 1; BAE28490." evidence="4" ref="1">
    <original>S</original>
    <variation>P</variation>
    <location>
        <position position="576"/>
    </location>
</feature>
<name>ZY11B_MOUSE</name>
<reference key="1">
    <citation type="journal article" date="2005" name="Science">
        <title>The transcriptional landscape of the mammalian genome.</title>
        <authorList>
            <person name="Carninci P."/>
            <person name="Kasukawa T."/>
            <person name="Katayama S."/>
            <person name="Gough J."/>
            <person name="Frith M.C."/>
            <person name="Maeda N."/>
            <person name="Oyama R."/>
            <person name="Ravasi T."/>
            <person name="Lenhard B."/>
            <person name="Wells C."/>
            <person name="Kodzius R."/>
            <person name="Shimokawa K."/>
            <person name="Bajic V.B."/>
            <person name="Brenner S.E."/>
            <person name="Batalov S."/>
            <person name="Forrest A.R."/>
            <person name="Zavolan M."/>
            <person name="Davis M.J."/>
            <person name="Wilming L.G."/>
            <person name="Aidinis V."/>
            <person name="Allen J.E."/>
            <person name="Ambesi-Impiombato A."/>
            <person name="Apweiler R."/>
            <person name="Aturaliya R.N."/>
            <person name="Bailey T.L."/>
            <person name="Bansal M."/>
            <person name="Baxter L."/>
            <person name="Beisel K.W."/>
            <person name="Bersano T."/>
            <person name="Bono H."/>
            <person name="Chalk A.M."/>
            <person name="Chiu K.P."/>
            <person name="Choudhary V."/>
            <person name="Christoffels A."/>
            <person name="Clutterbuck D.R."/>
            <person name="Crowe M.L."/>
            <person name="Dalla E."/>
            <person name="Dalrymple B.P."/>
            <person name="de Bono B."/>
            <person name="Della Gatta G."/>
            <person name="di Bernardo D."/>
            <person name="Down T."/>
            <person name="Engstrom P."/>
            <person name="Fagiolini M."/>
            <person name="Faulkner G."/>
            <person name="Fletcher C.F."/>
            <person name="Fukushima T."/>
            <person name="Furuno M."/>
            <person name="Futaki S."/>
            <person name="Gariboldi M."/>
            <person name="Georgii-Hemming P."/>
            <person name="Gingeras T.R."/>
            <person name="Gojobori T."/>
            <person name="Green R.E."/>
            <person name="Gustincich S."/>
            <person name="Harbers M."/>
            <person name="Hayashi Y."/>
            <person name="Hensch T.K."/>
            <person name="Hirokawa N."/>
            <person name="Hill D."/>
            <person name="Huminiecki L."/>
            <person name="Iacono M."/>
            <person name="Ikeo K."/>
            <person name="Iwama A."/>
            <person name="Ishikawa T."/>
            <person name="Jakt M."/>
            <person name="Kanapin A."/>
            <person name="Katoh M."/>
            <person name="Kawasawa Y."/>
            <person name="Kelso J."/>
            <person name="Kitamura H."/>
            <person name="Kitano H."/>
            <person name="Kollias G."/>
            <person name="Krishnan S.P."/>
            <person name="Kruger A."/>
            <person name="Kummerfeld S.K."/>
            <person name="Kurochkin I.V."/>
            <person name="Lareau L.F."/>
            <person name="Lazarevic D."/>
            <person name="Lipovich L."/>
            <person name="Liu J."/>
            <person name="Liuni S."/>
            <person name="McWilliam S."/>
            <person name="Madan Babu M."/>
            <person name="Madera M."/>
            <person name="Marchionni L."/>
            <person name="Matsuda H."/>
            <person name="Matsuzawa S."/>
            <person name="Miki H."/>
            <person name="Mignone F."/>
            <person name="Miyake S."/>
            <person name="Morris K."/>
            <person name="Mottagui-Tabar S."/>
            <person name="Mulder N."/>
            <person name="Nakano N."/>
            <person name="Nakauchi H."/>
            <person name="Ng P."/>
            <person name="Nilsson R."/>
            <person name="Nishiguchi S."/>
            <person name="Nishikawa S."/>
            <person name="Nori F."/>
            <person name="Ohara O."/>
            <person name="Okazaki Y."/>
            <person name="Orlando V."/>
            <person name="Pang K.C."/>
            <person name="Pavan W.J."/>
            <person name="Pavesi G."/>
            <person name="Pesole G."/>
            <person name="Petrovsky N."/>
            <person name="Piazza S."/>
            <person name="Reed J."/>
            <person name="Reid J.F."/>
            <person name="Ring B.Z."/>
            <person name="Ringwald M."/>
            <person name="Rost B."/>
            <person name="Ruan Y."/>
            <person name="Salzberg S.L."/>
            <person name="Sandelin A."/>
            <person name="Schneider C."/>
            <person name="Schoenbach C."/>
            <person name="Sekiguchi K."/>
            <person name="Semple C.A."/>
            <person name="Seno S."/>
            <person name="Sessa L."/>
            <person name="Sheng Y."/>
            <person name="Shibata Y."/>
            <person name="Shimada H."/>
            <person name="Shimada K."/>
            <person name="Silva D."/>
            <person name="Sinclair B."/>
            <person name="Sperling S."/>
            <person name="Stupka E."/>
            <person name="Sugiura K."/>
            <person name="Sultana R."/>
            <person name="Takenaka Y."/>
            <person name="Taki K."/>
            <person name="Tammoja K."/>
            <person name="Tan S.L."/>
            <person name="Tang S."/>
            <person name="Taylor M.S."/>
            <person name="Tegner J."/>
            <person name="Teichmann S.A."/>
            <person name="Ueda H.R."/>
            <person name="van Nimwegen E."/>
            <person name="Verardo R."/>
            <person name="Wei C.L."/>
            <person name="Yagi K."/>
            <person name="Yamanishi H."/>
            <person name="Zabarovsky E."/>
            <person name="Zhu S."/>
            <person name="Zimmer A."/>
            <person name="Hide W."/>
            <person name="Bult C."/>
            <person name="Grimmond S.M."/>
            <person name="Teasdale R.D."/>
            <person name="Liu E.T."/>
            <person name="Brusic V."/>
            <person name="Quackenbush J."/>
            <person name="Wahlestedt C."/>
            <person name="Mattick J.S."/>
            <person name="Hume D.A."/>
            <person name="Kai C."/>
            <person name="Sasaki D."/>
            <person name="Tomaru Y."/>
            <person name="Fukuda S."/>
            <person name="Kanamori-Katayama M."/>
            <person name="Suzuki M."/>
            <person name="Aoki J."/>
            <person name="Arakawa T."/>
            <person name="Iida J."/>
            <person name="Imamura K."/>
            <person name="Itoh M."/>
            <person name="Kato T."/>
            <person name="Kawaji H."/>
            <person name="Kawagashira N."/>
            <person name="Kawashima T."/>
            <person name="Kojima M."/>
            <person name="Kondo S."/>
            <person name="Konno H."/>
            <person name="Nakano K."/>
            <person name="Ninomiya N."/>
            <person name="Nishio T."/>
            <person name="Okada M."/>
            <person name="Plessy C."/>
            <person name="Shibata K."/>
            <person name="Shiraki T."/>
            <person name="Suzuki S."/>
            <person name="Tagami M."/>
            <person name="Waki K."/>
            <person name="Watahiki A."/>
            <person name="Okamura-Oho Y."/>
            <person name="Suzuki H."/>
            <person name="Kawai J."/>
            <person name="Hayashizaki Y."/>
        </authorList>
    </citation>
    <scope>NUCLEOTIDE SEQUENCE [LARGE SCALE MRNA] (ISOFORMS 1 AND 2)</scope>
    <source>
        <strain>C57BL/6J</strain>
        <tissue>Bone</tissue>
        <tissue>Lung</tissue>
        <tissue>Mammary gland</tissue>
        <tissue>Sympathetic ganglion</tissue>
    </source>
</reference>
<reference key="2">
    <citation type="journal article" date="2009" name="PLoS Biol.">
        <title>Lineage-specific biology revealed by a finished genome assembly of the mouse.</title>
        <authorList>
            <person name="Church D.M."/>
            <person name="Goodstadt L."/>
            <person name="Hillier L.W."/>
            <person name="Zody M.C."/>
            <person name="Goldstein S."/>
            <person name="She X."/>
            <person name="Bult C.J."/>
            <person name="Agarwala R."/>
            <person name="Cherry J.L."/>
            <person name="DiCuccio M."/>
            <person name="Hlavina W."/>
            <person name="Kapustin Y."/>
            <person name="Meric P."/>
            <person name="Maglott D."/>
            <person name="Birtle Z."/>
            <person name="Marques A.C."/>
            <person name="Graves T."/>
            <person name="Zhou S."/>
            <person name="Teague B."/>
            <person name="Potamousis K."/>
            <person name="Churas C."/>
            <person name="Place M."/>
            <person name="Herschleb J."/>
            <person name="Runnheim R."/>
            <person name="Forrest D."/>
            <person name="Amos-Landgraf J."/>
            <person name="Schwartz D.C."/>
            <person name="Cheng Z."/>
            <person name="Lindblad-Toh K."/>
            <person name="Eichler E.E."/>
            <person name="Ponting C.P."/>
        </authorList>
    </citation>
    <scope>NUCLEOTIDE SEQUENCE [LARGE SCALE GENOMIC DNA]</scope>
    <source>
        <strain>C57BL/6J</strain>
    </source>
</reference>
<reference key="3">
    <citation type="journal article" date="2004" name="Genome Res.">
        <title>The status, quality, and expansion of the NIH full-length cDNA project: the Mammalian Gene Collection (MGC).</title>
        <authorList>
            <consortium name="The MGC Project Team"/>
        </authorList>
    </citation>
    <scope>NUCLEOTIDE SEQUENCE [LARGE SCALE MRNA] (ISOFORMS 1 AND 3)</scope>
    <source>
        <tissue>Brain</tissue>
    </source>
</reference>
<reference key="4">
    <citation type="journal article" date="2003" name="DNA Res.">
        <title>Prediction of the coding sequences of mouse homologues of KIAA gene: II. The complete nucleotide sequences of 400 mouse KIAA-homologous cDNAs identified by screening of terminal sequences of cDNA clones randomly sampled from size-fractionated libraries.</title>
        <authorList>
            <person name="Okazaki N."/>
            <person name="Kikuno R."/>
            <person name="Ohara R."/>
            <person name="Inamoto S."/>
            <person name="Aizawa H."/>
            <person name="Yuasa S."/>
            <person name="Nakajima D."/>
            <person name="Nagase T."/>
            <person name="Ohara O."/>
            <person name="Koga H."/>
        </authorList>
    </citation>
    <scope>NUCLEOTIDE SEQUENCE [LARGE SCALE MRNA] OF 482-744 (ISOFORM 1)</scope>
    <source>
        <tissue>Brain</tissue>
    </source>
</reference>
<reference key="5">
    <citation type="journal article" date="2010" name="Cell">
        <title>A tissue-specific atlas of mouse protein phosphorylation and expression.</title>
        <authorList>
            <person name="Huttlin E.L."/>
            <person name="Jedrychowski M.P."/>
            <person name="Elias J.E."/>
            <person name="Goswami T."/>
            <person name="Rad R."/>
            <person name="Beausoleil S.A."/>
            <person name="Villen J."/>
            <person name="Haas W."/>
            <person name="Sowa M.E."/>
            <person name="Gygi S.P."/>
        </authorList>
    </citation>
    <scope>IDENTIFICATION BY MASS SPECTROMETRY [LARGE SCALE ANALYSIS]</scope>
    <source>
        <tissue>Brain</tissue>
        <tissue>Kidney</tissue>
        <tissue>Pancreas</tissue>
        <tissue>Spleen</tissue>
    </source>
</reference>
<proteinExistence type="evidence at protein level"/>
<gene>
    <name evidence="5" type="primary">Zyg11b</name>
    <name type="synonym">Kiaa1730</name>
</gene>
<evidence type="ECO:0000250" key="1">
    <source>
        <dbReference type="UniProtKB" id="Q9C0D3"/>
    </source>
</evidence>
<evidence type="ECO:0000303" key="2">
    <source>
    </source>
</evidence>
<evidence type="ECO:0000303" key="3">
    <source>
    </source>
</evidence>
<evidence type="ECO:0000305" key="4"/>
<evidence type="ECO:0000312" key="5">
    <source>
        <dbReference type="MGI" id="MGI:2685277"/>
    </source>
</evidence>
<sequence>MPEDQAHAAMEEASPYSLLDICLSFLTTNLEKFCSARQDGTLCLQEPGVFPQEVADRLLQTIAFHGLLNDGTVGIFRGNQMRLKRACIRKAKISAVAFRKAFCHHKLVELDATGVNADITITDIISGLGSNKWIQQNLQCLVLNSLTLSLEDPYERCFSRLSGLRALSITNVLFYNEDLAEVASLPRLESLDISNTSITDITALLACKDRLKSLTMHHLKCLKMTTTQILDVVRELKHLNHLDISDDKQFTSDIALRLLEQKDILPNLVSLDVSGRKHVTDKAVEAFIQQRPSMQFVGLLATDAGYSEFLMGKGHLKVSGEANETQIAEALRRYSERAFFVREALFHLFSLTHVMEKTKPDILKLVVTGMRNHPMNLPVQLAASACVFNLTKQDLALGMPVRLLADVTHLLLKAMEHFPNHQQLQKNCLLSLCSDRILQDVPFNRFEAAKLVMQWLCNHEDQNMQRMAVAIISILAAKLSTEQTAQLGAELFIVRQLLQIVKQKTNQNSVDTTLKFTLSALWNLTDESPTTCRHFIENQGLELFMRVLESFPTESSIQQKVLGLLNNIAEVQELHSELMWKDFIDHISSLLHSVEVEVSYFAAGIIAHLISRGEQAWTLSRSQRNSLLDDLHSAILKWPTPECEMVAYRSFNPFFPLLGCFTTPGVQLWAVWAMQHVCSKNPSRYCSMLIEEGGLQHLYNIKEHEQTDPYVQQIAVAILDSLEKHIVRHGRPPPCKKQPQARLN</sequence>
<keyword id="KW-0025">Alternative splicing</keyword>
<keyword id="KW-0433">Leucine-rich repeat</keyword>
<keyword id="KW-1185">Reference proteome</keyword>
<keyword id="KW-0677">Repeat</keyword>
<keyword id="KW-0833">Ubl conjugation pathway</keyword>
<organism>
    <name type="scientific">Mus musculus</name>
    <name type="common">Mouse</name>
    <dbReference type="NCBI Taxonomy" id="10090"/>
    <lineage>
        <taxon>Eukaryota</taxon>
        <taxon>Metazoa</taxon>
        <taxon>Chordata</taxon>
        <taxon>Craniata</taxon>
        <taxon>Vertebrata</taxon>
        <taxon>Euteleostomi</taxon>
        <taxon>Mammalia</taxon>
        <taxon>Eutheria</taxon>
        <taxon>Euarchontoglires</taxon>
        <taxon>Glires</taxon>
        <taxon>Rodentia</taxon>
        <taxon>Myomorpha</taxon>
        <taxon>Muroidea</taxon>
        <taxon>Muridae</taxon>
        <taxon>Murinae</taxon>
        <taxon>Mus</taxon>
        <taxon>Mus</taxon>
    </lineage>
</organism>
<protein>
    <recommendedName>
        <fullName evidence="4">Protein zyg-11 homolog B</fullName>
    </recommendedName>
</protein>